<keyword id="KW-0009">Actin-binding</keyword>
<keyword id="KW-0067">ATP-binding</keyword>
<keyword id="KW-0963">Cytoplasm</keyword>
<keyword id="KW-0206">Cytoskeleton</keyword>
<keyword id="KW-0378">Hydrolase</keyword>
<keyword id="KW-0505">Motor protein</keyword>
<keyword id="KW-0518">Myosin</keyword>
<keyword id="KW-0547">Nucleotide-binding</keyword>
<keyword id="KW-0597">Phosphoprotein</keyword>
<keyword id="KW-1185">Reference proteome</keyword>
<keyword id="KW-0677">Repeat</keyword>
<keyword id="KW-0728">SH3 domain</keyword>
<reference key="1">
    <citation type="submission" date="2005-09" db="EMBL/GenBank/DDBJ databases">
        <title>Annotation of the Aspergillus terreus NIH2624 genome.</title>
        <authorList>
            <person name="Birren B.W."/>
            <person name="Lander E.S."/>
            <person name="Galagan J.E."/>
            <person name="Nusbaum C."/>
            <person name="Devon K."/>
            <person name="Henn M."/>
            <person name="Ma L.-J."/>
            <person name="Jaffe D.B."/>
            <person name="Butler J."/>
            <person name="Alvarez P."/>
            <person name="Gnerre S."/>
            <person name="Grabherr M."/>
            <person name="Kleber M."/>
            <person name="Mauceli E.W."/>
            <person name="Brockman W."/>
            <person name="Rounsley S."/>
            <person name="Young S.K."/>
            <person name="LaButti K."/>
            <person name="Pushparaj V."/>
            <person name="DeCaprio D."/>
            <person name="Crawford M."/>
            <person name="Koehrsen M."/>
            <person name="Engels R."/>
            <person name="Montgomery P."/>
            <person name="Pearson M."/>
            <person name="Howarth C."/>
            <person name="Larson L."/>
            <person name="Luoma S."/>
            <person name="White J."/>
            <person name="Alvarado L."/>
            <person name="Kodira C.D."/>
            <person name="Zeng Q."/>
            <person name="Oleary S."/>
            <person name="Yandava C."/>
            <person name="Denning D.W."/>
            <person name="Nierman W.C."/>
            <person name="Milne T."/>
            <person name="Madden K."/>
        </authorList>
    </citation>
    <scope>NUCLEOTIDE SEQUENCE [LARGE SCALE GENOMIC DNA]</scope>
    <source>
        <strain>NIH 2624 / FGSC A1156</strain>
    </source>
</reference>
<protein>
    <recommendedName>
        <fullName>Myosin-1</fullName>
    </recommendedName>
    <alternativeName>
        <fullName>Class I unconventional myosin</fullName>
    </alternativeName>
    <alternativeName>
        <fullName>Type I myosin</fullName>
    </alternativeName>
</protein>
<comment type="function">
    <text evidence="1">Type-I myosin implicated in the organization of the actin cytoskeleton. Required for proper actin cytoskeleton polarization. At the cell cortex, assembles in patch-like structures together with proteins from the actin-polymerizing machinery and promotes actin assembly. Functions as actin nucleation-promoting factor (NPF) for the Arp2/3 complex. Plays an important role in polarized growth, spore germination, hyphal morphogenesis, and septal wall formation (By similarity).</text>
</comment>
<comment type="subcellular location">
    <subcellularLocation>
        <location evidence="1">Cytoplasm</location>
        <location evidence="1">Cytoskeleton</location>
        <location evidence="1">Actin patch</location>
    </subcellularLocation>
    <text evidence="1">Localizes to cortical patch-like structures. Enriched at sites of polarized growth, like the growing hyphal tips and sites of septum formation (By similarity).</text>
</comment>
<comment type="domain">
    <text evidence="1">The myosin motor domain displays actin-stimulated ATPase activity and generates a mechanochemical force.</text>
</comment>
<comment type="domain">
    <text evidence="1">The tail domain participates in molecular interactions that specify the role of the motor domain (By similarity). It is composed of several tail homology (TH) domains, namely a putative phospholipid-binding myosin tail domain (also named TH1), an Ala- and Pro-rich domain (TH2), followed by an SH3 domain and a C-terminal acidic domain (TH3).</text>
</comment>
<comment type="PTM">
    <text evidence="1">Phosphorylation of the TEDS site (Ser-372) is required for the polarization of the actin cytoskeleton. Phosphorylation probably activates the myosin-I ATPase activity (By similarity).</text>
</comment>
<comment type="similarity">
    <text evidence="7">Belongs to the TRAFAC class myosin-kinesin ATPase superfamily. Myosin family.</text>
</comment>
<organism>
    <name type="scientific">Aspergillus terreus (strain NIH 2624 / FGSC A1156)</name>
    <dbReference type="NCBI Taxonomy" id="341663"/>
    <lineage>
        <taxon>Eukaryota</taxon>
        <taxon>Fungi</taxon>
        <taxon>Dikarya</taxon>
        <taxon>Ascomycota</taxon>
        <taxon>Pezizomycotina</taxon>
        <taxon>Eurotiomycetes</taxon>
        <taxon>Eurotiomycetidae</taxon>
        <taxon>Eurotiales</taxon>
        <taxon>Aspergillaceae</taxon>
        <taxon>Aspergillus</taxon>
        <taxon>Aspergillus subgen. Circumdati</taxon>
    </lineage>
</organism>
<dbReference type="EMBL" id="CH476604">
    <property type="protein sequence ID" value="EAU32021.1"/>
    <property type="molecule type" value="Genomic_DNA"/>
</dbReference>
<dbReference type="RefSeq" id="XP_001216380.1">
    <property type="nucleotide sequence ID" value="XM_001216380.1"/>
</dbReference>
<dbReference type="SMR" id="Q0CEX5"/>
<dbReference type="STRING" id="341663.Q0CEX5"/>
<dbReference type="EnsemblFungi" id="EAU32021">
    <property type="protein sequence ID" value="EAU32021"/>
    <property type="gene ID" value="ATEG_07759"/>
</dbReference>
<dbReference type="GeneID" id="4322646"/>
<dbReference type="VEuPathDB" id="FungiDB:ATEG_07759"/>
<dbReference type="eggNOG" id="KOG0162">
    <property type="taxonomic scope" value="Eukaryota"/>
</dbReference>
<dbReference type="HOGENOM" id="CLU_000192_7_6_1"/>
<dbReference type="OMA" id="NDQENQC"/>
<dbReference type="OrthoDB" id="6108017at2759"/>
<dbReference type="Proteomes" id="UP000007963">
    <property type="component" value="Unassembled WGS sequence"/>
</dbReference>
<dbReference type="GO" id="GO:0030479">
    <property type="term" value="C:actin cortical patch"/>
    <property type="evidence" value="ECO:0007669"/>
    <property type="project" value="UniProtKB-SubCell"/>
</dbReference>
<dbReference type="GO" id="GO:0051285">
    <property type="term" value="C:cell cortex of cell tip"/>
    <property type="evidence" value="ECO:0007669"/>
    <property type="project" value="EnsemblFungi"/>
</dbReference>
<dbReference type="GO" id="GO:0043332">
    <property type="term" value="C:mating projection tip"/>
    <property type="evidence" value="ECO:0007669"/>
    <property type="project" value="EnsemblFungi"/>
</dbReference>
<dbReference type="GO" id="GO:0031097">
    <property type="term" value="C:medial cortex"/>
    <property type="evidence" value="ECO:0007669"/>
    <property type="project" value="EnsemblFungi"/>
</dbReference>
<dbReference type="GO" id="GO:0045160">
    <property type="term" value="C:myosin I complex"/>
    <property type="evidence" value="ECO:0007669"/>
    <property type="project" value="EnsemblFungi"/>
</dbReference>
<dbReference type="GO" id="GO:0044853">
    <property type="term" value="C:plasma membrane raft"/>
    <property type="evidence" value="ECO:0007669"/>
    <property type="project" value="EnsemblFungi"/>
</dbReference>
<dbReference type="GO" id="GO:0005628">
    <property type="term" value="C:prospore membrane"/>
    <property type="evidence" value="ECO:0007669"/>
    <property type="project" value="EnsemblFungi"/>
</dbReference>
<dbReference type="GO" id="GO:0051015">
    <property type="term" value="F:actin filament binding"/>
    <property type="evidence" value="ECO:0007669"/>
    <property type="project" value="EnsemblFungi"/>
</dbReference>
<dbReference type="GO" id="GO:0071933">
    <property type="term" value="F:Arp2/3 complex binding"/>
    <property type="evidence" value="ECO:0007669"/>
    <property type="project" value="EnsemblFungi"/>
</dbReference>
<dbReference type="GO" id="GO:0005524">
    <property type="term" value="F:ATP binding"/>
    <property type="evidence" value="ECO:0007669"/>
    <property type="project" value="UniProtKB-KW"/>
</dbReference>
<dbReference type="GO" id="GO:0016787">
    <property type="term" value="F:hydrolase activity"/>
    <property type="evidence" value="ECO:0007669"/>
    <property type="project" value="UniProtKB-KW"/>
</dbReference>
<dbReference type="GO" id="GO:0000146">
    <property type="term" value="F:microfilament motor activity"/>
    <property type="evidence" value="ECO:0007669"/>
    <property type="project" value="EnsemblFungi"/>
</dbReference>
<dbReference type="GO" id="GO:0000147">
    <property type="term" value="P:actin cortical patch assembly"/>
    <property type="evidence" value="ECO:0007669"/>
    <property type="project" value="EnsemblFungi"/>
</dbReference>
<dbReference type="GO" id="GO:0051666">
    <property type="term" value="P:actin cortical patch localization"/>
    <property type="evidence" value="ECO:0007669"/>
    <property type="project" value="TreeGrafter"/>
</dbReference>
<dbReference type="GO" id="GO:0007015">
    <property type="term" value="P:actin filament organization"/>
    <property type="evidence" value="ECO:0007669"/>
    <property type="project" value="TreeGrafter"/>
</dbReference>
<dbReference type="GO" id="GO:0006897">
    <property type="term" value="P:endocytosis"/>
    <property type="evidence" value="ECO:0007669"/>
    <property type="project" value="EnsemblFungi"/>
</dbReference>
<dbReference type="GO" id="GO:0000281">
    <property type="term" value="P:mitotic cytokinesis"/>
    <property type="evidence" value="ECO:0007669"/>
    <property type="project" value="EnsemblFungi"/>
</dbReference>
<dbReference type="CDD" id="cd01378">
    <property type="entry name" value="MYSc_Myo1"/>
    <property type="match status" value="1"/>
</dbReference>
<dbReference type="CDD" id="cd11858">
    <property type="entry name" value="SH3_Myosin-I_fungi"/>
    <property type="match status" value="1"/>
</dbReference>
<dbReference type="FunFam" id="1.10.10.820:FF:000001">
    <property type="entry name" value="Myosin heavy chain"/>
    <property type="match status" value="1"/>
</dbReference>
<dbReference type="FunFam" id="1.20.120.720:FF:000015">
    <property type="entry name" value="Myosin I"/>
    <property type="match status" value="1"/>
</dbReference>
<dbReference type="FunFam" id="2.30.30.40:FF:000254">
    <property type="entry name" value="Myosin I MyoA/Myo5"/>
    <property type="match status" value="1"/>
</dbReference>
<dbReference type="FunFam" id="1.20.5.4820:FF:000004">
    <property type="entry name" value="Myosin IE"/>
    <property type="match status" value="1"/>
</dbReference>
<dbReference type="FunFam" id="1.20.58.530:FF:000007">
    <property type="entry name" value="Myosin IE"/>
    <property type="match status" value="1"/>
</dbReference>
<dbReference type="Gene3D" id="1.10.10.820">
    <property type="match status" value="1"/>
</dbReference>
<dbReference type="Gene3D" id="1.20.5.4820">
    <property type="match status" value="1"/>
</dbReference>
<dbReference type="Gene3D" id="1.20.58.530">
    <property type="match status" value="1"/>
</dbReference>
<dbReference type="Gene3D" id="3.40.850.10">
    <property type="entry name" value="Kinesin motor domain"/>
    <property type="match status" value="1"/>
</dbReference>
<dbReference type="Gene3D" id="1.20.120.720">
    <property type="entry name" value="Myosin VI head, motor domain, U50 subdomain"/>
    <property type="match status" value="1"/>
</dbReference>
<dbReference type="Gene3D" id="2.30.30.40">
    <property type="entry name" value="SH3 Domains"/>
    <property type="match status" value="1"/>
</dbReference>
<dbReference type="InterPro" id="IPR035535">
    <property type="entry name" value="Fungal_myosin-I_SH3"/>
</dbReference>
<dbReference type="InterPro" id="IPR036961">
    <property type="entry name" value="Kinesin_motor_dom_sf"/>
</dbReference>
<dbReference type="InterPro" id="IPR054489">
    <property type="entry name" value="Myo1_CA"/>
</dbReference>
<dbReference type="InterPro" id="IPR001609">
    <property type="entry name" value="Myosin_head_motor_dom-like"/>
</dbReference>
<dbReference type="InterPro" id="IPR010926">
    <property type="entry name" value="Myosin_TH1"/>
</dbReference>
<dbReference type="InterPro" id="IPR036072">
    <property type="entry name" value="MYSc_Myo1"/>
</dbReference>
<dbReference type="InterPro" id="IPR027417">
    <property type="entry name" value="P-loop_NTPase"/>
</dbReference>
<dbReference type="InterPro" id="IPR036028">
    <property type="entry name" value="SH3-like_dom_sf"/>
</dbReference>
<dbReference type="InterPro" id="IPR001452">
    <property type="entry name" value="SH3_domain"/>
</dbReference>
<dbReference type="PANTHER" id="PTHR13140">
    <property type="entry name" value="MYOSIN"/>
    <property type="match status" value="1"/>
</dbReference>
<dbReference type="PANTHER" id="PTHR13140:SF837">
    <property type="entry name" value="MYOSIN-3-RELATED"/>
    <property type="match status" value="1"/>
</dbReference>
<dbReference type="Pfam" id="PF22773">
    <property type="entry name" value="Myo1_CA"/>
    <property type="match status" value="1"/>
</dbReference>
<dbReference type="Pfam" id="PF00063">
    <property type="entry name" value="Myosin_head"/>
    <property type="match status" value="1"/>
</dbReference>
<dbReference type="Pfam" id="PF06017">
    <property type="entry name" value="Myosin_TH1"/>
    <property type="match status" value="1"/>
</dbReference>
<dbReference type="Pfam" id="PF00018">
    <property type="entry name" value="SH3_1"/>
    <property type="match status" value="1"/>
</dbReference>
<dbReference type="PRINTS" id="PR00193">
    <property type="entry name" value="MYOSINHEAVY"/>
</dbReference>
<dbReference type="SMART" id="SM00242">
    <property type="entry name" value="MYSc"/>
    <property type="match status" value="1"/>
</dbReference>
<dbReference type="SMART" id="SM00326">
    <property type="entry name" value="SH3"/>
    <property type="match status" value="1"/>
</dbReference>
<dbReference type="SUPFAM" id="SSF52540">
    <property type="entry name" value="P-loop containing nucleoside triphosphate hydrolases"/>
    <property type="match status" value="1"/>
</dbReference>
<dbReference type="SUPFAM" id="SSF50044">
    <property type="entry name" value="SH3-domain"/>
    <property type="match status" value="1"/>
</dbReference>
<dbReference type="PROSITE" id="PS51456">
    <property type="entry name" value="MYOSIN_MOTOR"/>
    <property type="match status" value="1"/>
</dbReference>
<dbReference type="PROSITE" id="PS50002">
    <property type="entry name" value="SH3"/>
    <property type="match status" value="1"/>
</dbReference>
<dbReference type="PROSITE" id="PS51757">
    <property type="entry name" value="TH1"/>
    <property type="match status" value="1"/>
</dbReference>
<sequence>MGHSRRPVGGEKKSRGFGRSKAVADVGDGRQTGGKPQVKKATFESTKKKEIGVSDLTLLSKISNEAINDNLKLRFQHDEIYTYIGHVLVSVNPFRDLGIYTDKVLESYRGKNRLEVPPHVFAVAESAYYNMKSYNDNQCVIISGESGAGKTEAAKRIMQYIASVSGGSDSSIQHTKDMVLATNPLLESFGNAKTLRNNNSSRFGKYLELEFNSRGEPVGANITNYLLEKSRVVGQITNERNFHIFYQFTKAAPQKYRDMFGIQQPQSYLYTSRSKCYDVPGVDDAAEFRDTLNAMGVIGMSEPEQDQVFRMLSAILWIGNIQFVEDDSGNAAIPDQSTVNYVAYLLEVDPGQVNKALTIRIMETARGGRRGSVYEVPLNTVQALAVRDALAKAIYFNLFDWIVERVNQSLTARGTVANSIGILDIYGFEIFEKNSFEQLCINYVNEKLQQIFIQLTLKAEQDEYAREQIQWTPIKYFDNKVVCSLIEDKRPPGVFAALNDACATAHADSGAADNTFVGRLNFLSQNPNFENRQGQFIVKHYAGDVSYAVEGMTDKNKDQLLKDLLNLVGSSSNEFVHTLFPNQVNQDDKRRPPTASDKIKASANDLVATLMKAQPSYIRTIKPNDNKAPKEYNEGNVLHQIKYLGLQENVRIRRAGFAYRQTFDKFVERFYLLSPKTSYAGDYTWTGDAESGARQILKDTSIPQEEFQMGITKVFVKTPETLFALEAMRDRYWHNMAIRIQRAWRNYLRYRIECAIRIQRFWRRMTGGLELIKVRDQGHKVLQGRKERRRMSLLGSRRFLGDYLGIANKGGPGEMIRNGAGIGSDTVLFSCRGEVLVSKFGRSSKPSPRIFVLTNRHFIIVAQNLVNGQLVISAERTIPIGAIKSVSTSNLKDDWFSFVIGAQEPDPLMNCVFKTELFTHLSNALHGQLNIKIADHIEYNKKPGKLATVKVVKEPGSSNVDTYKSSTIHTSAGEPPSSVSKPTPRGKQVAARPVTKGKLLRPGGPGGGPSKLAARPMPARQPVPQPAASQAPAPQPAAVPRPVPQPVAAVAASHTRTASSGSMRAPPPPPPVSPPAPKKPMAKVLYDFSSAQSNELSIKAGELVEIVSKEGNGWWLCMNTTTSVQGWTPQAYLEEQKAAPPPPPPAAPRSTPATNGTATAAAAKAKPAPPAPPAKRPNMAGRKMAPPPPSAPRDSAVSMNSQDSSGGSGRGTPNSASNASLAGGLAEALRQRQEAMHGKQDDDDEW</sequence>
<name>MYO1_ASPTN</name>
<feature type="chain" id="PRO_0000338541" description="Myosin-1">
    <location>
        <begin position="1"/>
        <end position="1246"/>
    </location>
</feature>
<feature type="domain" description="Myosin motor" evidence="4">
    <location>
        <begin position="51"/>
        <end position="730"/>
    </location>
</feature>
<feature type="domain" description="IQ 1">
    <location>
        <begin position="734"/>
        <end position="754"/>
    </location>
</feature>
<feature type="domain" description="IQ 2">
    <location>
        <begin position="755"/>
        <end position="780"/>
    </location>
</feature>
<feature type="domain" description="TH1" evidence="5">
    <location>
        <begin position="788"/>
        <end position="976"/>
    </location>
</feature>
<feature type="domain" description="SH3" evidence="3">
    <location>
        <begin position="1077"/>
        <end position="1138"/>
    </location>
</feature>
<feature type="region of interest" description="Disordered" evidence="6">
    <location>
        <begin position="1"/>
        <end position="41"/>
    </location>
</feature>
<feature type="region of interest" description="Actin-binding" evidence="1">
    <location>
        <begin position="419"/>
        <end position="501"/>
    </location>
</feature>
<feature type="region of interest" description="Disordered" evidence="6">
    <location>
        <begin position="956"/>
        <end position="1080"/>
    </location>
</feature>
<feature type="region of interest" description="Disordered" evidence="6">
    <location>
        <begin position="1127"/>
        <end position="1246"/>
    </location>
</feature>
<feature type="compositionally biased region" description="Polar residues" evidence="6">
    <location>
        <begin position="956"/>
        <end position="970"/>
    </location>
</feature>
<feature type="compositionally biased region" description="Pro residues" evidence="6">
    <location>
        <begin position="1033"/>
        <end position="1045"/>
    </location>
</feature>
<feature type="compositionally biased region" description="Pro residues" evidence="6">
    <location>
        <begin position="1065"/>
        <end position="1078"/>
    </location>
</feature>
<feature type="compositionally biased region" description="Low complexity" evidence="6">
    <location>
        <begin position="1151"/>
        <end position="1166"/>
    </location>
</feature>
<feature type="compositionally biased region" description="Low complexity" evidence="6">
    <location>
        <begin position="1214"/>
        <end position="1228"/>
    </location>
</feature>
<feature type="compositionally biased region" description="Basic and acidic residues" evidence="6">
    <location>
        <begin position="1229"/>
        <end position="1240"/>
    </location>
</feature>
<feature type="binding site" evidence="2">
    <location>
        <begin position="144"/>
        <end position="151"/>
    </location>
    <ligand>
        <name>ATP</name>
        <dbReference type="ChEBI" id="CHEBI:30616"/>
    </ligand>
</feature>
<feature type="modified residue" description="Phosphoserine" evidence="1">
    <location>
        <position position="372"/>
    </location>
</feature>
<accession>Q0CEX5</accession>
<gene>
    <name type="primary">myoA</name>
    <name type="ORF">ATEG_07759</name>
</gene>
<evidence type="ECO:0000250" key="1"/>
<evidence type="ECO:0000255" key="2"/>
<evidence type="ECO:0000255" key="3">
    <source>
        <dbReference type="PROSITE-ProRule" id="PRU00192"/>
    </source>
</evidence>
<evidence type="ECO:0000255" key="4">
    <source>
        <dbReference type="PROSITE-ProRule" id="PRU00782"/>
    </source>
</evidence>
<evidence type="ECO:0000255" key="5">
    <source>
        <dbReference type="PROSITE-ProRule" id="PRU01093"/>
    </source>
</evidence>
<evidence type="ECO:0000256" key="6">
    <source>
        <dbReference type="SAM" id="MobiDB-lite"/>
    </source>
</evidence>
<evidence type="ECO:0000305" key="7"/>
<proteinExistence type="inferred from homology"/>